<reference key="1">
    <citation type="journal article" date="2004" name="Gene">
        <title>Identification and characterization of a novel gene family YPEL in a wide spectrum of eukaryotic species.</title>
        <authorList>
            <person name="Hosono K."/>
            <person name="Sasaki T."/>
            <person name="Minoshima S."/>
            <person name="Shimizu N."/>
        </authorList>
    </citation>
    <scope>NUCLEOTIDE SEQUENCE [MRNA]</scope>
    <scope>TISSUE SPECIFICITY</scope>
</reference>
<accession>Q65Z93</accession>
<comment type="subcellular location">
    <subcellularLocation>
        <location>Nucleus</location>
        <location>Nucleolus</location>
    </subcellularLocation>
</comment>
<comment type="tissue specificity">
    <text evidence="3">Detected in brain, spleen and testis.</text>
</comment>
<comment type="similarity">
    <text evidence="4">Belongs to the yippee family.</text>
</comment>
<gene>
    <name type="primary">Ypel4</name>
</gene>
<sequence>MPSCDPGPAPACLPTKTFRSYLPRCHRTYSCVHCRAHLAKHDELISKSFQGSHGRAYLFNSVVNVGCGPAEQRLLLTGLHSVADIFCESCKTTLGWKYEQAFETSQKYKEGKYIIEMSHMVKDNGWD</sequence>
<proteinExistence type="evidence at transcript level"/>
<protein>
    <recommendedName>
        <fullName>Protein yippee-like 4</fullName>
    </recommendedName>
</protein>
<keyword id="KW-0479">Metal-binding</keyword>
<keyword id="KW-0539">Nucleus</keyword>
<keyword id="KW-0597">Phosphoprotein</keyword>
<keyword id="KW-1185">Reference proteome</keyword>
<keyword id="KW-0862">Zinc</keyword>
<name>YPEL4_MOUSE</name>
<organism>
    <name type="scientific">Mus musculus</name>
    <name type="common">Mouse</name>
    <dbReference type="NCBI Taxonomy" id="10090"/>
    <lineage>
        <taxon>Eukaryota</taxon>
        <taxon>Metazoa</taxon>
        <taxon>Chordata</taxon>
        <taxon>Craniata</taxon>
        <taxon>Vertebrata</taxon>
        <taxon>Euteleostomi</taxon>
        <taxon>Mammalia</taxon>
        <taxon>Eutheria</taxon>
        <taxon>Euarchontoglires</taxon>
        <taxon>Glires</taxon>
        <taxon>Rodentia</taxon>
        <taxon>Myomorpha</taxon>
        <taxon>Muroidea</taxon>
        <taxon>Muridae</taxon>
        <taxon>Murinae</taxon>
        <taxon>Mus</taxon>
        <taxon>Mus</taxon>
    </lineage>
</organism>
<dbReference type="EMBL" id="AB098743">
    <property type="protein sequence ID" value="BAD51384.1"/>
    <property type="molecule type" value="mRNA"/>
</dbReference>
<dbReference type="CCDS" id="CCDS16192.1"/>
<dbReference type="RefSeq" id="NP_001005342.1">
    <property type="nucleotide sequence ID" value="NM_001005342.2"/>
</dbReference>
<dbReference type="RefSeq" id="XP_006499529.1">
    <property type="nucleotide sequence ID" value="XM_006499466.4"/>
</dbReference>
<dbReference type="RefSeq" id="XP_036017785.1">
    <property type="nucleotide sequence ID" value="XM_036161892.1"/>
</dbReference>
<dbReference type="SMR" id="Q65Z93"/>
<dbReference type="BioGRID" id="232321">
    <property type="interactions" value="2"/>
</dbReference>
<dbReference type="FunCoup" id="Q65Z93">
    <property type="interactions" value="4"/>
</dbReference>
<dbReference type="STRING" id="10090.ENSMUSP00000088231"/>
<dbReference type="PhosphoSitePlus" id="Q65Z93"/>
<dbReference type="PaxDb" id="10090-ENSMUSP00000088231"/>
<dbReference type="ProteomicsDB" id="275229"/>
<dbReference type="Antibodypedia" id="65159">
    <property type="antibodies" value="24 antibodies from 14 providers"/>
</dbReference>
<dbReference type="DNASU" id="241525"/>
<dbReference type="Ensembl" id="ENSMUST00000090729.9">
    <property type="protein sequence ID" value="ENSMUSP00000088231.3"/>
    <property type="gene ID" value="ENSMUSG00000034059.15"/>
</dbReference>
<dbReference type="GeneID" id="241525"/>
<dbReference type="KEGG" id="mmu:241525"/>
<dbReference type="UCSC" id="uc008kjc.1">
    <property type="organism name" value="mouse"/>
</dbReference>
<dbReference type="AGR" id="MGI:3605071"/>
<dbReference type="CTD" id="219539"/>
<dbReference type="MGI" id="MGI:3605071">
    <property type="gene designation" value="Ypel4"/>
</dbReference>
<dbReference type="VEuPathDB" id="HostDB:ENSMUSG00000034059"/>
<dbReference type="eggNOG" id="KOG3399">
    <property type="taxonomic scope" value="Eukaryota"/>
</dbReference>
<dbReference type="GeneTree" id="ENSGT00940000161443"/>
<dbReference type="HOGENOM" id="CLU_043857_5_2_1"/>
<dbReference type="InParanoid" id="Q65Z93"/>
<dbReference type="OMA" id="CCCGQII"/>
<dbReference type="PhylomeDB" id="Q65Z93"/>
<dbReference type="TreeFam" id="TF313936"/>
<dbReference type="BioGRID-ORCS" id="241525">
    <property type="hits" value="0 hits in 77 CRISPR screens"/>
</dbReference>
<dbReference type="PRO" id="PR:Q65Z93"/>
<dbReference type="Proteomes" id="UP000000589">
    <property type="component" value="Chromosome 2"/>
</dbReference>
<dbReference type="RNAct" id="Q65Z93">
    <property type="molecule type" value="protein"/>
</dbReference>
<dbReference type="Bgee" id="ENSMUSG00000034059">
    <property type="expression patterns" value="Expressed in cerebellar cortex and 147 other cell types or tissues"/>
</dbReference>
<dbReference type="ExpressionAtlas" id="Q65Z93">
    <property type="expression patterns" value="baseline and differential"/>
</dbReference>
<dbReference type="GO" id="GO:0005730">
    <property type="term" value="C:nucleolus"/>
    <property type="evidence" value="ECO:0007669"/>
    <property type="project" value="UniProtKB-SubCell"/>
</dbReference>
<dbReference type="GO" id="GO:0046872">
    <property type="term" value="F:metal ion binding"/>
    <property type="evidence" value="ECO:0007669"/>
    <property type="project" value="UniProtKB-KW"/>
</dbReference>
<dbReference type="GO" id="GO:0034107">
    <property type="term" value="P:negative regulation of erythrocyte clearance"/>
    <property type="evidence" value="ECO:0000315"/>
    <property type="project" value="MGI"/>
</dbReference>
<dbReference type="GO" id="GO:0045647">
    <property type="term" value="P:negative regulation of erythrocyte differentiation"/>
    <property type="evidence" value="ECO:0000315"/>
    <property type="project" value="MGI"/>
</dbReference>
<dbReference type="GO" id="GO:0072659">
    <property type="term" value="P:protein localization to plasma membrane"/>
    <property type="evidence" value="ECO:0000315"/>
    <property type="project" value="MGI"/>
</dbReference>
<dbReference type="GO" id="GO:0008360">
    <property type="term" value="P:regulation of cell shape"/>
    <property type="evidence" value="ECO:0000315"/>
    <property type="project" value="MGI"/>
</dbReference>
<dbReference type="InterPro" id="IPR034751">
    <property type="entry name" value="Yippee"/>
</dbReference>
<dbReference type="InterPro" id="IPR004910">
    <property type="entry name" value="Yippee/Mis18/Cereblon"/>
</dbReference>
<dbReference type="InterPro" id="IPR039058">
    <property type="entry name" value="Yippee_fam"/>
</dbReference>
<dbReference type="PANTHER" id="PTHR13848">
    <property type="entry name" value="PROTEIN YIPPEE-LIKE CG15309-RELATED"/>
    <property type="match status" value="1"/>
</dbReference>
<dbReference type="Pfam" id="PF03226">
    <property type="entry name" value="Yippee-Mis18"/>
    <property type="match status" value="1"/>
</dbReference>
<dbReference type="PROSITE" id="PS51792">
    <property type="entry name" value="YIPPEE"/>
    <property type="match status" value="1"/>
</dbReference>
<evidence type="ECO:0000250" key="1">
    <source>
        <dbReference type="UniProtKB" id="Q5XID5"/>
    </source>
</evidence>
<evidence type="ECO:0000255" key="2">
    <source>
        <dbReference type="PROSITE-ProRule" id="PRU01128"/>
    </source>
</evidence>
<evidence type="ECO:0000269" key="3">
    <source>
    </source>
</evidence>
<evidence type="ECO:0000305" key="4"/>
<feature type="chain" id="PRO_0000212393" description="Protein yippee-like 4">
    <location>
        <begin position="1"/>
        <end position="127"/>
    </location>
</feature>
<feature type="domain" description="Yippee" evidence="2">
    <location>
        <begin position="27"/>
        <end position="124"/>
    </location>
</feature>
<feature type="binding site" evidence="2">
    <location>
        <position position="31"/>
    </location>
    <ligand>
        <name>Zn(2+)</name>
        <dbReference type="ChEBI" id="CHEBI:29105"/>
    </ligand>
</feature>
<feature type="binding site" evidence="2">
    <location>
        <position position="34"/>
    </location>
    <ligand>
        <name>Zn(2+)</name>
        <dbReference type="ChEBI" id="CHEBI:29105"/>
    </ligand>
</feature>
<feature type="binding site" evidence="2">
    <location>
        <position position="87"/>
    </location>
    <ligand>
        <name>Zn(2+)</name>
        <dbReference type="ChEBI" id="CHEBI:29105"/>
    </ligand>
</feature>
<feature type="binding site" evidence="2">
    <location>
        <position position="90"/>
    </location>
    <ligand>
        <name>Zn(2+)</name>
        <dbReference type="ChEBI" id="CHEBI:29105"/>
    </ligand>
</feature>
<feature type="modified residue" description="Phosphothreonine" evidence="1">
    <location>
        <position position="92"/>
    </location>
</feature>
<feature type="modified residue" description="Phosphothreonine" evidence="1">
    <location>
        <position position="93"/>
    </location>
</feature>
<feature type="modified residue" description="Phosphotyrosine" evidence="1">
    <location>
        <position position="98"/>
    </location>
</feature>